<dbReference type="EMBL" id="U51921">
    <property type="status" value="NOT_ANNOTATED_CDS"/>
    <property type="molecule type" value="Genomic_DNA"/>
</dbReference>
<dbReference type="EMBL" id="AF480009">
    <property type="protein sequence ID" value="AAL79322.1"/>
    <property type="status" value="ALT_SEQ"/>
    <property type="molecule type" value="Genomic_DNA"/>
</dbReference>
<dbReference type="EMBL" id="BK006945">
    <property type="protein sequence ID" value="DAA09476.1"/>
    <property type="molecule type" value="Genomic_DNA"/>
</dbReference>
<dbReference type="BioGRID" id="36955">
    <property type="interactions" value="1"/>
</dbReference>
<dbReference type="FunCoup" id="P0CF00">
    <property type="interactions" value="10"/>
</dbReference>
<dbReference type="STRING" id="4932.YLR157W-E"/>
<dbReference type="PaxDb" id="4932-YLR157W-E"/>
<dbReference type="EnsemblFungi" id="YLR157W-E_mRNA">
    <property type="protein sequence ID" value="YLR157W-E"/>
    <property type="gene ID" value="YLR157W-E"/>
</dbReference>
<dbReference type="GeneID" id="1466413"/>
<dbReference type="KEGG" id="sce:YLR157W-E"/>
<dbReference type="AGR" id="SGD:S000028678"/>
<dbReference type="SGD" id="S000028678">
    <property type="gene designation" value="YLR157W-E"/>
</dbReference>
<dbReference type="VEuPathDB" id="FungiDB:YLR157W-E"/>
<dbReference type="GeneTree" id="ENSGT00940000178389"/>
<dbReference type="HOGENOM" id="CLU_3052147_0_0_1"/>
<dbReference type="InParanoid" id="P0CF00"/>
<dbReference type="BioCyc" id="YEAST:G3O-32586-MONOMER"/>
<dbReference type="PRO" id="PR:P0CF00"/>
<dbReference type="Proteomes" id="UP000002311">
    <property type="component" value="Chromosome XII"/>
</dbReference>
<dbReference type="RNAct" id="P0CF00">
    <property type="molecule type" value="protein"/>
</dbReference>
<proteinExistence type="evidence at transcript level"/>
<name>YL57E_YEAST</name>
<keyword id="KW-1185">Reference proteome</keyword>
<organism>
    <name type="scientific">Saccharomyces cerevisiae (strain ATCC 204508 / S288c)</name>
    <name type="common">Baker's yeast</name>
    <dbReference type="NCBI Taxonomy" id="559292"/>
    <lineage>
        <taxon>Eukaryota</taxon>
        <taxon>Fungi</taxon>
        <taxon>Dikarya</taxon>
        <taxon>Ascomycota</taxon>
        <taxon>Saccharomycotina</taxon>
        <taxon>Saccharomycetes</taxon>
        <taxon>Saccharomycetales</taxon>
        <taxon>Saccharomycetaceae</taxon>
        <taxon>Saccharomyces</taxon>
    </lineage>
</organism>
<gene>
    <name type="ordered locus">YLR157W-E</name>
</gene>
<sequence>MIVDFYSNTLRHCETLRSQPCSLFSSLYARSFQSSCTLHVAEPSPGFHMYGCHT</sequence>
<accession>P0CF00</accession>
<accession>D6VYG0</accession>
<accession>Q12478</accession>
<accession>Q8TGJ5</accession>
<accession>Q8TGJ6</accession>
<protein>
    <recommendedName>
        <fullName>Putative uncharacterized protein YLR157W-E</fullName>
    </recommendedName>
</protein>
<reference key="1">
    <citation type="journal article" date="1997" name="Nature">
        <title>The nucleotide sequence of Saccharomyces cerevisiae chromosome XII.</title>
        <authorList>
            <person name="Johnston M."/>
            <person name="Hillier L.W."/>
            <person name="Riles L."/>
            <person name="Albermann K."/>
            <person name="Andre B."/>
            <person name="Ansorge W."/>
            <person name="Benes V."/>
            <person name="Brueckner M."/>
            <person name="Delius H."/>
            <person name="Dubois E."/>
            <person name="Duesterhoeft A."/>
            <person name="Entian K.-D."/>
            <person name="Floeth M."/>
            <person name="Goffeau A."/>
            <person name="Hebling U."/>
            <person name="Heumann K."/>
            <person name="Heuss-Neitzel D."/>
            <person name="Hilbert H."/>
            <person name="Hilger F."/>
            <person name="Kleine K."/>
            <person name="Koetter P."/>
            <person name="Louis E.J."/>
            <person name="Messenguy F."/>
            <person name="Mewes H.-W."/>
            <person name="Miosga T."/>
            <person name="Moestl D."/>
            <person name="Mueller-Auer S."/>
            <person name="Nentwich U."/>
            <person name="Obermaier B."/>
            <person name="Piravandi E."/>
            <person name="Pohl T.M."/>
            <person name="Portetelle D."/>
            <person name="Purnelle B."/>
            <person name="Rechmann S."/>
            <person name="Rieger M."/>
            <person name="Rinke M."/>
            <person name="Rose M."/>
            <person name="Scharfe M."/>
            <person name="Scherens B."/>
            <person name="Scholler P."/>
            <person name="Schwager C."/>
            <person name="Schwarz S."/>
            <person name="Underwood A.P."/>
            <person name="Urrestarazu L.A."/>
            <person name="Vandenbol M."/>
            <person name="Verhasselt P."/>
            <person name="Vierendeels F."/>
            <person name="Voet M."/>
            <person name="Volckaert G."/>
            <person name="Voss H."/>
            <person name="Wambutt R."/>
            <person name="Wedler E."/>
            <person name="Wedler H."/>
            <person name="Zimmermann F.K."/>
            <person name="Zollner A."/>
            <person name="Hani J."/>
            <person name="Hoheisel J.D."/>
        </authorList>
    </citation>
    <scope>NUCLEOTIDE SEQUENCE [LARGE SCALE GENOMIC DNA]</scope>
    <source>
        <strain>ATCC 204508 / S288c</strain>
    </source>
</reference>
<reference key="2">
    <citation type="journal article" date="2014" name="G3 (Bethesda)">
        <title>The reference genome sequence of Saccharomyces cerevisiae: Then and now.</title>
        <authorList>
            <person name="Engel S.R."/>
            <person name="Dietrich F.S."/>
            <person name="Fisk D.G."/>
            <person name="Binkley G."/>
            <person name="Balakrishnan R."/>
            <person name="Costanzo M.C."/>
            <person name="Dwight S.S."/>
            <person name="Hitz B.C."/>
            <person name="Karra K."/>
            <person name="Nash R.S."/>
            <person name="Weng S."/>
            <person name="Wong E.D."/>
            <person name="Lloyd P."/>
            <person name="Skrzypek M.S."/>
            <person name="Miyasato S.R."/>
            <person name="Simison M."/>
            <person name="Cherry J.M."/>
        </authorList>
    </citation>
    <scope>GENOME REANNOTATION</scope>
    <source>
        <strain>ATCC 204508 / S288c</strain>
    </source>
</reference>
<reference key="3">
    <citation type="journal article" date="2002" name="Nat. Biotechnol.">
        <title>An integrated approach for finding overlooked genes in yeast.</title>
        <authorList>
            <person name="Kumar A."/>
            <person name="Harrison P.M."/>
            <person name="Cheung K.-H."/>
            <person name="Lan N."/>
            <person name="Echols N."/>
            <person name="Bertone P."/>
            <person name="Miller P."/>
            <person name="Gerstein M.B."/>
            <person name="Snyder M."/>
        </authorList>
    </citation>
    <scope>NUCLEOTIDE SEQUENCE [GENOMIC DNA]</scope>
</reference>
<comment type="miscellaneous">
    <text>There are 3 tandem-duplicated genes coding for this protein in S.cerevisiae (YLR156W, YLR159W and YLR161W). Additionally, a fourth copy has been disrupted by a Ty1 retrotransposon, which led to the prediction of the 2 dubious ORFs YLR157W-D and YLR157W-E.</text>
</comment>
<feature type="chain" id="PRO_0000393298" description="Putative uncharacterized protein YLR157W-E">
    <location>
        <begin position="1"/>
        <end position="54"/>
    </location>
</feature>